<gene>
    <name type="primary">PHOT1A</name>
    <name type="ordered locus">Os12g0101800</name>
    <name type="ordered locus">LOC_Os12g01140</name>
</gene>
<keyword id="KW-0067">ATP-binding</keyword>
<keyword id="KW-0157">Chromophore</keyword>
<keyword id="KW-0285">Flavoprotein</keyword>
<keyword id="KW-0288">FMN</keyword>
<keyword id="KW-0418">Kinase</keyword>
<keyword id="KW-0547">Nucleotide-binding</keyword>
<keyword id="KW-0600">Photoreceptor protein</keyword>
<keyword id="KW-0675">Receptor</keyword>
<keyword id="KW-1185">Reference proteome</keyword>
<keyword id="KW-0677">Repeat</keyword>
<keyword id="KW-0716">Sensory transduction</keyword>
<keyword id="KW-0723">Serine/threonine-protein kinase</keyword>
<keyword id="KW-0808">Transferase</keyword>
<organism>
    <name type="scientific">Oryza sativa subsp. japonica</name>
    <name type="common">Rice</name>
    <dbReference type="NCBI Taxonomy" id="39947"/>
    <lineage>
        <taxon>Eukaryota</taxon>
        <taxon>Viridiplantae</taxon>
        <taxon>Streptophyta</taxon>
        <taxon>Embryophyta</taxon>
        <taxon>Tracheophyta</taxon>
        <taxon>Spermatophyta</taxon>
        <taxon>Magnoliopsida</taxon>
        <taxon>Liliopsida</taxon>
        <taxon>Poales</taxon>
        <taxon>Poaceae</taxon>
        <taxon>BOP clade</taxon>
        <taxon>Oryzoideae</taxon>
        <taxon>Oryzeae</taxon>
        <taxon>Oryzinae</taxon>
        <taxon>Oryza</taxon>
        <taxon>Oryza sativa</taxon>
    </lineage>
</organism>
<comment type="function">
    <text evidence="1">Protein kinase that acts as a blue light photoreceptor in a signal-transduction pathway for phototropic responses. Regulates a wide range of physiological activities in plants that maximize the efficiency of photosynthesis, such as chloroplast relocations, stomata opening, and leaf expansion (By similarity).</text>
</comment>
<comment type="catalytic activity">
    <reaction>
        <text>L-seryl-[protein] + ATP = O-phospho-L-seryl-[protein] + ADP + H(+)</text>
        <dbReference type="Rhea" id="RHEA:17989"/>
        <dbReference type="Rhea" id="RHEA-COMP:9863"/>
        <dbReference type="Rhea" id="RHEA-COMP:11604"/>
        <dbReference type="ChEBI" id="CHEBI:15378"/>
        <dbReference type="ChEBI" id="CHEBI:29999"/>
        <dbReference type="ChEBI" id="CHEBI:30616"/>
        <dbReference type="ChEBI" id="CHEBI:83421"/>
        <dbReference type="ChEBI" id="CHEBI:456216"/>
        <dbReference type="EC" id="2.7.11.1"/>
    </reaction>
</comment>
<comment type="catalytic activity">
    <reaction>
        <text>L-threonyl-[protein] + ATP = O-phospho-L-threonyl-[protein] + ADP + H(+)</text>
        <dbReference type="Rhea" id="RHEA:46608"/>
        <dbReference type="Rhea" id="RHEA-COMP:11060"/>
        <dbReference type="Rhea" id="RHEA-COMP:11605"/>
        <dbReference type="ChEBI" id="CHEBI:15378"/>
        <dbReference type="ChEBI" id="CHEBI:30013"/>
        <dbReference type="ChEBI" id="CHEBI:30616"/>
        <dbReference type="ChEBI" id="CHEBI:61977"/>
        <dbReference type="ChEBI" id="CHEBI:456216"/>
        <dbReference type="EC" id="2.7.11.1"/>
    </reaction>
</comment>
<comment type="cofactor">
    <cofactor evidence="1">
        <name>FMN</name>
        <dbReference type="ChEBI" id="CHEBI:58210"/>
    </cofactor>
    <text evidence="1">Binds 2 FMN per subunit.</text>
</comment>
<comment type="biophysicochemical properties">
    <absorption>
        <max evidence="8">450 nm</max>
        <text>Exhibits a smaller absorbance peak at 350 nm. The broad fluorescence emission spectrum peaks at 490 nm.</text>
    </absorption>
</comment>
<comment type="subunit">
    <text evidence="1">Homodimer.</text>
</comment>
<comment type="tissue specificity">
    <text evidence="7">Highly expressed in coleoptiles of dark-grown seedlings.</text>
</comment>
<comment type="induction">
    <text evidence="7">Down-regulated by white light in dark-grown seedlings.</text>
</comment>
<comment type="domain">
    <text evidence="1">The PAS (PER-ARNT-SIM) domains are required for the binding of FMN chromophores.</text>
</comment>
<comment type="PTM">
    <text evidence="1">Autophosphorylated in response to blue light irradiation.</text>
</comment>
<comment type="PTM">
    <text evidence="1">2 molecules of FMN bind covalently to cysteines after exposure to blue light and are reversed in the dark.</text>
</comment>
<comment type="miscellaneous">
    <text>Undergoes a photocycle characterized by fluorescence and absorption changes induced by blue light.</text>
</comment>
<comment type="similarity">
    <text evidence="4">Belongs to the protein kinase superfamily. Ser/Thr protein kinase family.</text>
</comment>
<dbReference type="EC" id="2.7.11.1"/>
<dbReference type="EMBL" id="AB018444">
    <property type="protein sequence ID" value="BAA84780.1"/>
    <property type="molecule type" value="mRNA"/>
</dbReference>
<dbReference type="EMBL" id="DP000011">
    <property type="protein sequence ID" value="ABA95572.2"/>
    <property type="molecule type" value="Genomic_DNA"/>
</dbReference>
<dbReference type="EMBL" id="AP008218">
    <property type="protein sequence ID" value="BAF28932.1"/>
    <property type="molecule type" value="Genomic_DNA"/>
</dbReference>
<dbReference type="EMBL" id="AP014968">
    <property type="status" value="NOT_ANNOTATED_CDS"/>
    <property type="molecule type" value="Genomic_DNA"/>
</dbReference>
<dbReference type="RefSeq" id="XP_015620213.1">
    <property type="nucleotide sequence ID" value="XM_015764727.1"/>
</dbReference>
<dbReference type="SMR" id="Q2QYY8"/>
<dbReference type="FunCoup" id="Q2QYY8">
    <property type="interactions" value="589"/>
</dbReference>
<dbReference type="STRING" id="39947.Q2QYY8"/>
<dbReference type="PaxDb" id="39947-Q2QYY8"/>
<dbReference type="EnsemblPlants" id="Os12t0101800-03">
    <property type="protein sequence ID" value="Os12t0101800-03"/>
    <property type="gene ID" value="Os12g0101800"/>
</dbReference>
<dbReference type="Gramene" id="Os12t0101800-03">
    <property type="protein sequence ID" value="Os12t0101800-03"/>
    <property type="gene ID" value="Os12g0101800"/>
</dbReference>
<dbReference type="KEGG" id="dosa:Os12g0101800"/>
<dbReference type="InParanoid" id="Q2QYY8"/>
<dbReference type="OrthoDB" id="432483at2759"/>
<dbReference type="Proteomes" id="UP000000763">
    <property type="component" value="Chromosome 12"/>
</dbReference>
<dbReference type="Proteomes" id="UP000059680">
    <property type="component" value="Chromosome 12"/>
</dbReference>
<dbReference type="GO" id="GO:0005737">
    <property type="term" value="C:cytoplasm"/>
    <property type="evidence" value="ECO:0000318"/>
    <property type="project" value="GO_Central"/>
</dbReference>
<dbReference type="GO" id="GO:0005634">
    <property type="term" value="C:nucleus"/>
    <property type="evidence" value="ECO:0000318"/>
    <property type="project" value="GO_Central"/>
</dbReference>
<dbReference type="GO" id="GO:0005886">
    <property type="term" value="C:plasma membrane"/>
    <property type="evidence" value="ECO:0000318"/>
    <property type="project" value="GO_Central"/>
</dbReference>
<dbReference type="GO" id="GO:0005524">
    <property type="term" value="F:ATP binding"/>
    <property type="evidence" value="ECO:0007669"/>
    <property type="project" value="UniProtKB-KW"/>
</dbReference>
<dbReference type="GO" id="GO:0009882">
    <property type="term" value="F:blue light photoreceptor activity"/>
    <property type="evidence" value="ECO:0000314"/>
    <property type="project" value="UniProtKB"/>
</dbReference>
<dbReference type="GO" id="GO:0106310">
    <property type="term" value="F:protein serine kinase activity"/>
    <property type="evidence" value="ECO:0007669"/>
    <property type="project" value="RHEA"/>
</dbReference>
<dbReference type="GO" id="GO:0004674">
    <property type="term" value="F:protein serine/threonine kinase activity"/>
    <property type="evidence" value="ECO:0000318"/>
    <property type="project" value="GO_Central"/>
</dbReference>
<dbReference type="CDD" id="cd00130">
    <property type="entry name" value="PAS"/>
    <property type="match status" value="2"/>
</dbReference>
<dbReference type="CDD" id="cd05574">
    <property type="entry name" value="STKc_phototropin_like"/>
    <property type="match status" value="1"/>
</dbReference>
<dbReference type="FunFam" id="3.30.200.20:FF:000133">
    <property type="entry name" value="LOV domain-containing protein"/>
    <property type="match status" value="1"/>
</dbReference>
<dbReference type="FunFam" id="3.30.450.20:FF:000002">
    <property type="entry name" value="LOV domain-containing protein"/>
    <property type="match status" value="1"/>
</dbReference>
<dbReference type="FunFam" id="1.10.510.10:FF:000265">
    <property type="entry name" value="Putative LOV domain-containing protein"/>
    <property type="match status" value="1"/>
</dbReference>
<dbReference type="FunFam" id="3.30.450.20:FF:000036">
    <property type="entry name" value="Putative LOV domain-containing protein"/>
    <property type="match status" value="1"/>
</dbReference>
<dbReference type="Gene3D" id="3.30.450.20">
    <property type="entry name" value="PAS domain"/>
    <property type="match status" value="2"/>
</dbReference>
<dbReference type="Gene3D" id="3.30.200.20">
    <property type="entry name" value="Phosphorylase Kinase, domain 1"/>
    <property type="match status" value="1"/>
</dbReference>
<dbReference type="Gene3D" id="1.10.510.10">
    <property type="entry name" value="Transferase(Phosphotransferase) domain 1"/>
    <property type="match status" value="1"/>
</dbReference>
<dbReference type="InterPro" id="IPR011009">
    <property type="entry name" value="Kinase-like_dom_sf"/>
</dbReference>
<dbReference type="InterPro" id="IPR001610">
    <property type="entry name" value="PAC"/>
</dbReference>
<dbReference type="InterPro" id="IPR000014">
    <property type="entry name" value="PAS"/>
</dbReference>
<dbReference type="InterPro" id="IPR000700">
    <property type="entry name" value="PAS-assoc_C"/>
</dbReference>
<dbReference type="InterPro" id="IPR035965">
    <property type="entry name" value="PAS-like_dom_sf"/>
</dbReference>
<dbReference type="InterPro" id="IPR000719">
    <property type="entry name" value="Prot_kinase_dom"/>
</dbReference>
<dbReference type="InterPro" id="IPR017441">
    <property type="entry name" value="Protein_kinase_ATP_BS"/>
</dbReference>
<dbReference type="InterPro" id="IPR008271">
    <property type="entry name" value="Ser/Thr_kinase_AS"/>
</dbReference>
<dbReference type="NCBIfam" id="TIGR00229">
    <property type="entry name" value="sensory_box"/>
    <property type="match status" value="2"/>
</dbReference>
<dbReference type="PANTHER" id="PTHR45637">
    <property type="entry name" value="FLIPPASE KINASE 1-RELATED"/>
    <property type="match status" value="1"/>
</dbReference>
<dbReference type="Pfam" id="PF13426">
    <property type="entry name" value="PAS_9"/>
    <property type="match status" value="2"/>
</dbReference>
<dbReference type="Pfam" id="PF00069">
    <property type="entry name" value="Pkinase"/>
    <property type="match status" value="1"/>
</dbReference>
<dbReference type="SMART" id="SM00086">
    <property type="entry name" value="PAC"/>
    <property type="match status" value="2"/>
</dbReference>
<dbReference type="SMART" id="SM00091">
    <property type="entry name" value="PAS"/>
    <property type="match status" value="2"/>
</dbReference>
<dbReference type="SMART" id="SM00220">
    <property type="entry name" value="S_TKc"/>
    <property type="match status" value="1"/>
</dbReference>
<dbReference type="SUPFAM" id="SSF56112">
    <property type="entry name" value="Protein kinase-like (PK-like)"/>
    <property type="match status" value="1"/>
</dbReference>
<dbReference type="SUPFAM" id="SSF55785">
    <property type="entry name" value="PYP-like sensor domain (PAS domain)"/>
    <property type="match status" value="2"/>
</dbReference>
<dbReference type="PROSITE" id="PS50113">
    <property type="entry name" value="PAC"/>
    <property type="match status" value="2"/>
</dbReference>
<dbReference type="PROSITE" id="PS50112">
    <property type="entry name" value="PAS"/>
    <property type="match status" value="2"/>
</dbReference>
<dbReference type="PROSITE" id="PS00107">
    <property type="entry name" value="PROTEIN_KINASE_ATP"/>
    <property type="match status" value="1"/>
</dbReference>
<dbReference type="PROSITE" id="PS50011">
    <property type="entry name" value="PROTEIN_KINASE_DOM"/>
    <property type="match status" value="1"/>
</dbReference>
<dbReference type="PROSITE" id="PS00108">
    <property type="entry name" value="PROTEIN_KINASE_ST"/>
    <property type="match status" value="1"/>
</dbReference>
<name>PHT1A_ORYSJ</name>
<reference key="1">
    <citation type="journal article" date="2000" name="Plant Cell Physiol.">
        <title>Rice NPH1 homologues, OsNPH1a and OsNPH1b, are differently photoregulated.</title>
        <authorList>
            <person name="Kanegae H."/>
            <person name="Tahir M."/>
            <person name="Savazzini F."/>
            <person name="Yamamoto K."/>
            <person name="Yano M."/>
            <person name="Sasaki T."/>
            <person name="Kanegae T."/>
            <person name="Wada M."/>
            <person name="Takano M."/>
        </authorList>
    </citation>
    <scope>NUCLEOTIDE SEQUENCE [MRNA]</scope>
    <scope>TISSUE SPECIFICITY</scope>
    <scope>INDUCTION</scope>
    <source>
        <strain>cv. Nohrin 8</strain>
    </source>
</reference>
<reference key="2">
    <citation type="journal article" date="2005" name="BMC Biol.">
        <title>The sequence of rice chromosomes 11 and 12, rich in disease resistance genes and recent gene duplications.</title>
        <authorList>
            <consortium name="The rice chromosomes 11 and 12 sequencing consortia"/>
        </authorList>
    </citation>
    <scope>NUCLEOTIDE SEQUENCE [LARGE SCALE GENOMIC DNA]</scope>
    <source>
        <strain>cv. Nipponbare</strain>
    </source>
</reference>
<reference key="3">
    <citation type="journal article" date="2005" name="Nature">
        <title>The map-based sequence of the rice genome.</title>
        <authorList>
            <consortium name="International rice genome sequencing project (IRGSP)"/>
        </authorList>
    </citation>
    <scope>NUCLEOTIDE SEQUENCE [LARGE SCALE GENOMIC DNA]</scope>
    <source>
        <strain>cv. Nipponbare</strain>
    </source>
</reference>
<reference key="4">
    <citation type="journal article" date="2008" name="Nucleic Acids Res.">
        <title>The rice annotation project database (RAP-DB): 2008 update.</title>
        <authorList>
            <consortium name="The rice annotation project (RAP)"/>
        </authorList>
    </citation>
    <scope>GENOME REANNOTATION</scope>
    <source>
        <strain>cv. Nipponbare</strain>
    </source>
</reference>
<reference key="5">
    <citation type="journal article" date="2013" name="Rice">
        <title>Improvement of the Oryza sativa Nipponbare reference genome using next generation sequence and optical map data.</title>
        <authorList>
            <person name="Kawahara Y."/>
            <person name="de la Bastide M."/>
            <person name="Hamilton J.P."/>
            <person name="Kanamori H."/>
            <person name="McCombie W.R."/>
            <person name="Ouyang S."/>
            <person name="Schwartz D.C."/>
            <person name="Tanaka T."/>
            <person name="Wu J."/>
            <person name="Zhou S."/>
            <person name="Childs K.L."/>
            <person name="Davidson R.M."/>
            <person name="Lin H."/>
            <person name="Quesada-Ocampo L."/>
            <person name="Vaillancourt B."/>
            <person name="Sakai H."/>
            <person name="Lee S.S."/>
            <person name="Kim J."/>
            <person name="Numa H."/>
            <person name="Itoh T."/>
            <person name="Buell C.R."/>
            <person name="Matsumoto T."/>
        </authorList>
    </citation>
    <scope>GENOME REANNOTATION</scope>
    <source>
        <strain>cv. Nipponbare</strain>
    </source>
</reference>
<reference key="6">
    <citation type="journal article" date="2002" name="Plant Physiol.">
        <title>Photochemical properties of the flavin mononucleotide-binding domains of the phototropins from Arabidopsis, rice, and Chlamydomonas reinhardtii.</title>
        <authorList>
            <person name="Kasahara M."/>
            <person name="Swartz T.E."/>
            <person name="Olney M.A."/>
            <person name="Onodera A."/>
            <person name="Mochizuki N."/>
            <person name="Fukuzawa H."/>
            <person name="Asamizu E."/>
            <person name="Tabata S."/>
            <person name="Kanegae H."/>
            <person name="Takano M."/>
            <person name="Christie J.M."/>
            <person name="Nagatani A."/>
            <person name="Briggs W.R."/>
        </authorList>
    </citation>
    <scope>BIOPHYSICOCHEMICAL PROPERTIES</scope>
</reference>
<accession>Q2QYY8</accession>
<accession>Q9ST26</accession>
<feature type="chain" id="PRO_0000395002" description="Phototropin-1A">
    <location>
        <begin position="1"/>
        <end position="921"/>
    </location>
</feature>
<feature type="domain" description="PAS 1" evidence="2">
    <location>
        <begin position="123"/>
        <end position="197"/>
    </location>
</feature>
<feature type="domain" description="PAC 1" evidence="3">
    <location>
        <begin position="197"/>
        <end position="251"/>
    </location>
</feature>
<feature type="domain" description="PAS 2" evidence="2">
    <location>
        <begin position="400"/>
        <end position="473"/>
    </location>
</feature>
<feature type="domain" description="PAC 2" evidence="3">
    <location>
        <begin position="474"/>
        <end position="528"/>
    </location>
</feature>
<feature type="domain" description="Protein kinase" evidence="4">
    <location>
        <begin position="594"/>
        <end position="881"/>
    </location>
</feature>
<feature type="region of interest" description="Disordered" evidence="6">
    <location>
        <begin position="1"/>
        <end position="59"/>
    </location>
</feature>
<feature type="region of interest" description="Disordered" evidence="6">
    <location>
        <begin position="88"/>
        <end position="118"/>
    </location>
</feature>
<feature type="region of interest" description="Disordered" evidence="6">
    <location>
        <begin position="286"/>
        <end position="347"/>
    </location>
</feature>
<feature type="region of interest" description="Disordered" evidence="6">
    <location>
        <begin position="364"/>
        <end position="390"/>
    </location>
</feature>
<feature type="compositionally biased region" description="Gly residues" evidence="6">
    <location>
        <begin position="1"/>
        <end position="11"/>
    </location>
</feature>
<feature type="compositionally biased region" description="Low complexity" evidence="6">
    <location>
        <begin position="40"/>
        <end position="51"/>
    </location>
</feature>
<feature type="compositionally biased region" description="Polar residues" evidence="6">
    <location>
        <begin position="97"/>
        <end position="117"/>
    </location>
</feature>
<feature type="compositionally biased region" description="Polar residues" evidence="6">
    <location>
        <begin position="286"/>
        <end position="295"/>
    </location>
</feature>
<feature type="compositionally biased region" description="Basic and acidic residues" evidence="6">
    <location>
        <begin position="312"/>
        <end position="321"/>
    </location>
</feature>
<feature type="compositionally biased region" description="Basic and acidic residues" evidence="6">
    <location>
        <begin position="364"/>
        <end position="376"/>
    </location>
</feature>
<feature type="active site" description="Proton acceptor" evidence="4 5">
    <location>
        <position position="719"/>
    </location>
</feature>
<feature type="binding site" evidence="1">
    <location>
        <begin position="172"/>
        <end position="177"/>
    </location>
    <ligand>
        <name>FMN</name>
        <dbReference type="ChEBI" id="CHEBI:58210"/>
    </ligand>
</feature>
<feature type="binding site" evidence="1">
    <location>
        <position position="190"/>
    </location>
    <ligand>
        <name>FMN</name>
        <dbReference type="ChEBI" id="CHEBI:58210"/>
    </ligand>
</feature>
<feature type="binding site" evidence="1">
    <location>
        <position position="205"/>
    </location>
    <ligand>
        <name>FMN</name>
        <dbReference type="ChEBI" id="CHEBI:58210"/>
    </ligand>
</feature>
<feature type="binding site" evidence="1">
    <location>
        <position position="215"/>
    </location>
    <ligand>
        <name>FMN</name>
        <dbReference type="ChEBI" id="CHEBI:58210"/>
    </ligand>
</feature>
<feature type="binding site" evidence="1">
    <location>
        <position position="236"/>
    </location>
    <ligand>
        <name>FMN</name>
        <dbReference type="ChEBI" id="CHEBI:58210"/>
    </ligand>
</feature>
<feature type="binding site" evidence="1">
    <location>
        <begin position="449"/>
        <end position="454"/>
    </location>
    <ligand>
        <name>FMN</name>
        <dbReference type="ChEBI" id="CHEBI:58210"/>
    </ligand>
</feature>
<feature type="binding site" evidence="1">
    <location>
        <position position="467"/>
    </location>
    <ligand>
        <name>FMN</name>
        <dbReference type="ChEBI" id="CHEBI:58210"/>
    </ligand>
</feature>
<feature type="binding site" evidence="1">
    <location>
        <position position="482"/>
    </location>
    <ligand>
        <name>FMN</name>
        <dbReference type="ChEBI" id="CHEBI:58210"/>
    </ligand>
</feature>
<feature type="binding site" evidence="1">
    <location>
        <position position="492"/>
    </location>
    <ligand>
        <name>FMN</name>
        <dbReference type="ChEBI" id="CHEBI:58210"/>
    </ligand>
</feature>
<feature type="binding site" evidence="1">
    <location>
        <position position="513"/>
    </location>
    <ligand>
        <name>FMN</name>
        <dbReference type="ChEBI" id="CHEBI:58210"/>
    </ligand>
</feature>
<feature type="binding site" evidence="4">
    <location>
        <begin position="600"/>
        <end position="608"/>
    </location>
    <ligand>
        <name>ATP</name>
        <dbReference type="ChEBI" id="CHEBI:30616"/>
    </ligand>
</feature>
<feature type="binding site" evidence="4">
    <location>
        <position position="623"/>
    </location>
    <ligand>
        <name>ATP</name>
        <dbReference type="ChEBI" id="CHEBI:30616"/>
    </ligand>
</feature>
<feature type="modified residue" description="S-4a-FMN cysteine" evidence="1">
    <location>
        <position position="173"/>
    </location>
</feature>
<feature type="modified residue" description="S-4a-FMN cysteine" evidence="1">
    <location>
        <position position="450"/>
    </location>
</feature>
<feature type="sequence conflict" description="In Ref. 1; BAA84780." evidence="9" ref="1">
    <original>A</original>
    <variation>V</variation>
    <location>
        <position position="133"/>
    </location>
</feature>
<feature type="sequence conflict" description="In Ref. 1; BAA84780." evidence="9" ref="1">
    <original>N</original>
    <variation>T</variation>
    <location>
        <position position="916"/>
    </location>
</feature>
<protein>
    <recommendedName>
        <fullName>Phototropin-1A</fullName>
        <ecNumber>2.7.11.1</ecNumber>
    </recommendedName>
    <alternativeName>
        <fullName>Non-phototropic hypocotyl protein 1A</fullName>
        <shortName>OsNPH1a</shortName>
    </alternativeName>
</protein>
<sequence length="921" mass="103382">MASKGTEGGHGGVERKEQQQQRGYQLPRDSRGSLEVFNPSSASSFRTAAAAPKSASPFLAIPDREEDNVVAQQRAAEWGLVLQTDHHTGLPQGVSARPSSGSARTSSEDNPQQQQSAAAIPRVSEELRAALSAFQQTFVVSDATHPNHPIMYASAGFFNMTGYTSKEVVGRNCRFLQGSGTDPHEIDKIRQSLANGSNYCGRILNYKKDGTPFWNLLTIAPIKDEDGRLLKFIGMQVEVSKYTEGKKDTVVRPNGLSESLIKYDARQKDHARSSVSELLLALKNPRSLSESSNNTLKRKSQESLSMSMTEVPSKRSSESGSRRNSRSGTRSSLQKINEVPDQGNRTRKSGLRAFMGFLGMGHGSVEKNMLKPRDEDPLIDSDDERPESFEDEFRRKEMRRGIDLATTLERIEKNFVITDPRLPDNPIIFASDSFLQLTEYNREEILGRNCRFLQGPETDRATVRKIRDAIDNQAEVTVQLINYTKSGKKFWNLFHLQPMRDQKGDVQYFIGVQLDGTEHVQDDAAKEGVVLVKKTADNIDEAAKELPDANLRPEDLWANHSKVVLPNPHMKDTASWRAIQKVLESGESIGLKHFRPVKPLGSGDTGSVHLVELLNTGEYFAMKAMDKSIMLNRNKVHRATAERQILDLLDHPFLPTLYASFQTKTHICLITDYCPGGELFVLLDNQPLKVLHEDAVRFYAAEVVVALEYLHCQGIIYRDLKPENILLHRDGHISLTDFDLSCLTSCRPQVFLPEDADEKKGRKNGSYPIFFAEPMRASNSFVGTEEYIAPEIITGAGHTSAVDWWALGILLYEMLYGYTPFRGKTRQRTFANILHKDIRFPASISVSLAARQLMYRLLHRDPANRLGSYEGANEIKGHPFFRGINWPLIRATAPPKLEIPLFSKDDMEKKGLVTNNRTDMF</sequence>
<proteinExistence type="evidence at protein level"/>
<evidence type="ECO:0000250" key="1"/>
<evidence type="ECO:0000255" key="2">
    <source>
        <dbReference type="PROSITE-ProRule" id="PRU00140"/>
    </source>
</evidence>
<evidence type="ECO:0000255" key="3">
    <source>
        <dbReference type="PROSITE-ProRule" id="PRU00141"/>
    </source>
</evidence>
<evidence type="ECO:0000255" key="4">
    <source>
        <dbReference type="PROSITE-ProRule" id="PRU00159"/>
    </source>
</evidence>
<evidence type="ECO:0000255" key="5">
    <source>
        <dbReference type="PROSITE-ProRule" id="PRU10027"/>
    </source>
</evidence>
<evidence type="ECO:0000256" key="6">
    <source>
        <dbReference type="SAM" id="MobiDB-lite"/>
    </source>
</evidence>
<evidence type="ECO:0000269" key="7">
    <source>
    </source>
</evidence>
<evidence type="ECO:0000269" key="8">
    <source>
    </source>
</evidence>
<evidence type="ECO:0000305" key="9"/>